<evidence type="ECO:0000250" key="1"/>
<evidence type="ECO:0000250" key="2">
    <source>
        <dbReference type="UniProtKB" id="O55028"/>
    </source>
</evidence>
<evidence type="ECO:0000250" key="3">
    <source>
        <dbReference type="UniProtKB" id="Q00972"/>
    </source>
</evidence>
<evidence type="ECO:0000255" key="4">
    <source>
        <dbReference type="PROSITE-ProRule" id="PRU00107"/>
    </source>
</evidence>
<evidence type="ECO:0000269" key="5">
    <source>
    </source>
</evidence>
<evidence type="ECO:0000269" key="6">
    <source>
    </source>
</evidence>
<evidence type="ECO:0000269" key="7">
    <source>
    </source>
</evidence>
<evidence type="ECO:0000269" key="8">
    <source>
    </source>
</evidence>
<evidence type="ECO:0000269" key="9">
    <source>
    </source>
</evidence>
<evidence type="ECO:0000303" key="10">
    <source>
    </source>
</evidence>
<evidence type="ECO:0000303" key="11">
    <source>
    </source>
</evidence>
<evidence type="ECO:0000303" key="12">
    <source>
    </source>
</evidence>
<evidence type="ECO:0000303" key="13">
    <source>
    </source>
</evidence>
<evidence type="ECO:0000305" key="14"/>
<evidence type="ECO:0000305" key="15">
    <source>
    </source>
</evidence>
<evidence type="ECO:0000312" key="16">
    <source>
        <dbReference type="HGNC" id="HGNC:16902"/>
    </source>
</evidence>
<evidence type="ECO:0007744" key="17">
    <source>
        <dbReference type="PDB" id="8F5J"/>
    </source>
</evidence>
<evidence type="ECO:0007744" key="18">
    <source>
        <dbReference type="PDB" id="8F5S"/>
    </source>
</evidence>
<evidence type="ECO:0007744" key="19">
    <source>
    </source>
</evidence>
<evidence type="ECO:0007829" key="20">
    <source>
        <dbReference type="PDB" id="8F5F"/>
    </source>
</evidence>
<evidence type="ECO:0007829" key="21">
    <source>
        <dbReference type="PDB" id="8F5J"/>
    </source>
</evidence>
<evidence type="ECO:0007829" key="22">
    <source>
        <dbReference type="PDB" id="8F5S"/>
    </source>
</evidence>
<proteinExistence type="evidence at protein level"/>
<accession>O14874</accession>
<accession>A8MY43</accession>
<accession>Q6FGL4</accession>
<accession>Q96G95</accession>
<accession>Q96IN5</accession>
<keyword id="KW-0002">3D-structure</keyword>
<keyword id="KW-0007">Acetylation</keyword>
<keyword id="KW-0025">Alternative splicing</keyword>
<keyword id="KW-0067">ATP-binding</keyword>
<keyword id="KW-1269">Autism</keyword>
<keyword id="KW-1268">Autism spectrum disorder</keyword>
<keyword id="KW-0225">Disease variant</keyword>
<keyword id="KW-0887">Epilepsy</keyword>
<keyword id="KW-0991">Intellectual disability</keyword>
<keyword id="KW-0418">Kinase</keyword>
<keyword id="KW-0496">Mitochondrion</keyword>
<keyword id="KW-0547">Nucleotide-binding</keyword>
<keyword id="KW-0597">Phosphoprotein</keyword>
<keyword id="KW-1267">Proteomics identification</keyword>
<keyword id="KW-1185">Reference proteome</keyword>
<keyword id="KW-0808">Transferase</keyword>
<keyword id="KW-0809">Transit peptide</keyword>
<sequence length="412" mass="46360">MILASVLRSGPGGGLPLRPLLGPALALRARSTSATDTHHVEMARERSKTVTSFYNQSAIDAAAEKPSVRLTPTMMLYAGRSQDGSHLLKSARYLQQELPVRIAHRIKGFRCLPFIIGCNPTILHVHELYIRAFQKLTDFPPIKDQADEAQYCQLVRQLLDDHKDVVTLLAEGLRESRKHIEDEKLVRYFLDKTLTSRLGIRMLATHHLALHEDKPDFVGIICTRLSPKKIIEKWVDFARRLCEHKYGNAPRVRINGHVAARFPFIPMPLDYILPELLKNAMRATMESHLDTPYNVPDVVITIANNDVDLIIRISDRGGGIAHKDLDRVMDYHFTTAEASTQDPRISPLFGHLDMHSGAQSGPMHGFGFGLPTSRAYAEYLGGSLQLQSLQGIGTDVYLRLRHIDGREESFRI</sequence>
<name>BCKD_HUMAN</name>
<comment type="function">
    <text evidence="7 8 9">Serine/threonine-protein kinase component of macronutrients metabolism. Forms a functional kinase and phosphatase pair with PPM1K, serving as a metabolic regulatory node that coordinates branched-chain amino acids (BCAAs) with glucose and lipid metabolism via two distinct phosphoprotein targets: mitochondrial BCKDHA subunit of the branched-chain alpha-ketoacid dehydrogenase (BCKDH) complex and cytosolic ACLY, a lipogenic enzyme of Krebs cycle (PubMed:24449431, PubMed:29779826, PubMed:37558654). Phosphorylates and inactivates mitochondrial BCKDH complex a multisubunit complex consisting of three multimeric components each involved in different steps of BCAA catabolism: E1 composed of BCKDHA and BCKDHB, E2 core composed of DBT monomers, and E3 composed of DLD monomers. Associates with the E2 component of BCKDH complex and phosphorylates BCKDHA on Ser-337, leading to conformational changes that interrupt substrate channeling between E1 and E2 and inactivates the BCKDH complex (PubMed:29779826, PubMed:37558654). Phosphorylates ACLY on Ser-455 in response to changes in cellular carbohydrate abundance such as occurs during fasting to feeding metabolic transition. Refeeding stimulates MLXIPL/ChREBP transcription factor, leading to increased BCKDK to PPM1K expression ratio, phosphorylation and activation of ACLY that ultimately results in the generation of malonyl-CoA and oxaloacetate immediate substrates of de novo lipogenesis and glucogenesis, respectively (PubMed:29779826). Recognizes phosphosites having SxxE/D canonical motif (PubMed:29779826).</text>
</comment>
<comment type="catalytic activity">
    <reaction evidence="7 8 9">
        <text>L-seryl-[3-methyl-2-oxobutanoate dehydrogenase] + ATP = O-phospho-L-seryl-[3-methyl-2-oxobutanoate dehydrogenase] + ADP + H(+)</text>
        <dbReference type="Rhea" id="RHEA:17301"/>
        <dbReference type="Rhea" id="RHEA-COMP:13695"/>
        <dbReference type="Rhea" id="RHEA-COMP:13696"/>
        <dbReference type="ChEBI" id="CHEBI:15378"/>
        <dbReference type="ChEBI" id="CHEBI:29999"/>
        <dbReference type="ChEBI" id="CHEBI:30616"/>
        <dbReference type="ChEBI" id="CHEBI:83421"/>
        <dbReference type="ChEBI" id="CHEBI:456216"/>
        <dbReference type="EC" id="2.7.11.4"/>
    </reaction>
    <physiologicalReaction direction="left-to-right" evidence="7 8 9">
        <dbReference type="Rhea" id="RHEA:17302"/>
    </physiologicalReaction>
</comment>
<comment type="catalytic activity">
    <reaction evidence="7 8">
        <text>L-seryl-[protein] + ATP = O-phospho-L-seryl-[protein] + ADP + H(+)</text>
        <dbReference type="Rhea" id="RHEA:17989"/>
        <dbReference type="Rhea" id="RHEA-COMP:9863"/>
        <dbReference type="Rhea" id="RHEA-COMP:11604"/>
        <dbReference type="ChEBI" id="CHEBI:15378"/>
        <dbReference type="ChEBI" id="CHEBI:29999"/>
        <dbReference type="ChEBI" id="CHEBI:30616"/>
        <dbReference type="ChEBI" id="CHEBI:83421"/>
        <dbReference type="ChEBI" id="CHEBI:456216"/>
        <dbReference type="EC" id="2.7.11.1"/>
    </reaction>
    <physiologicalReaction direction="left-to-right" evidence="7 8">
        <dbReference type="Rhea" id="RHEA:17990"/>
    </physiologicalReaction>
</comment>
<comment type="activity regulation">
    <text evidence="9">Allosterically inhibited by certain thiazoles and thiophenes: thiazoles increase interaction with DBT/BCKDH-E2, whereas thiophenes reduce this interaction. Inhibited by 3,6- dichlorobenzo[b]thiophene-2-carboxylic acid (BT2) (PubMed:37558654). The ATP binding is mediated by both potassium and magnesium ions (PubMed:37558654).</text>
</comment>
<comment type="pathway">
    <text evidence="7 8">Protein modification.</text>
</comment>
<comment type="subunit">
    <text evidence="3 5 9">Homodimer. Homotetramer (By similarity). Dimerizes through interaction of two opposing nucleotide-binding domains. Interacts with E2 component of the branched-chain alpha-ketoacid dehydrogenase (BCKDH) complex. Competes with BCKDK for binding to the E2 component; this interaction is modulated by branched-chain alpha-keto acids. At steady state, BCKDH holoenzyme contains BCKDK and BCKDHA is phosphorylated. In response to high levels of branched-chain alpha-keto acids, the inhibitory BCKDK is replaced by activating PPM1K leading to BCKDHA dephosphorylation and BCAA degradation (PubMed:22589535, PubMed:37558654).</text>
</comment>
<comment type="interaction">
    <interactant intactId="EBI-1046765">
        <id>O14874</id>
    </interactant>
    <interactant intactId="EBI-10236049">
        <id>Q5VZV1</id>
        <label>METTL21C</label>
    </interactant>
    <organismsDiffer>false</organismsDiffer>
    <experiments>3</experiments>
</comment>
<comment type="interaction">
    <interactant intactId="EBI-1046765">
        <id>O14874</id>
    </interactant>
    <interactant intactId="EBI-375617">
        <id>P02549</id>
        <label>SPTA1</label>
    </interactant>
    <organismsDiffer>false</organismsDiffer>
    <experiments>3</experiments>
</comment>
<comment type="interaction">
    <interactant intactId="EBI-1046765">
        <id>O14874</id>
    </interactant>
    <interactant intactId="EBI-518675">
        <id>P40763</id>
        <label>STAT3</label>
    </interactant>
    <organismsDiffer>false</organismsDiffer>
    <experiments>2</experiments>
</comment>
<comment type="interaction">
    <interactant intactId="EBI-1046765">
        <id>O14874</id>
    </interactant>
    <interactant intactId="EBI-6863741">
        <id>PRO_0000037548</id>
        <dbReference type="UniProtKB" id="Q9WMX2"/>
    </interactant>
    <organismsDiffer>true</organismsDiffer>
    <experiments>2</experiments>
</comment>
<comment type="interaction">
    <interactant intactId="EBI-25895587">
        <id>O14874-2</id>
    </interactant>
    <interactant intactId="EBI-2837444">
        <id>Q8WUW1</id>
        <label>BRK1</label>
    </interactant>
    <organismsDiffer>false</organismsDiffer>
    <experiments>3</experiments>
</comment>
<comment type="subcellular location">
    <subcellularLocation>
        <location evidence="3 15">Mitochondrion matrix</location>
    </subcellularLocation>
    <text evidence="3">Detected in the cytosolic compartment of liver cells.</text>
</comment>
<comment type="alternative products">
    <event type="alternative splicing"/>
    <isoform>
        <id>O14874-1</id>
        <name>1</name>
        <sequence type="displayed"/>
    </isoform>
    <isoform>
        <id>O14874-2</id>
        <name>2</name>
        <sequence type="described" ref="VSP_054604 VSP_054605"/>
    </isoform>
    <isoform>
        <id>O14874-3</id>
        <name>3</name>
        <sequence type="described" ref="VSP_054605"/>
    </isoform>
</comment>
<comment type="tissue specificity">
    <text>Ubiquitous.</text>
</comment>
<comment type="PTM">
    <text evidence="7">Autophosphorylated.</text>
</comment>
<comment type="disease" evidence="6 7">
    <disease id="DI-03567">
        <name>Branched-chain ketoacid dehydrogenase kinase deficiency</name>
        <acronym>BCKDKD</acronym>
        <description>A metabolic disorder characterized by autism, epilepsy, intellectual disability, and reduced branched-chain amino acids.</description>
        <dbReference type="MIM" id="614923"/>
    </disease>
    <text>The disease is caused by variants affecting the gene represented in this entry. A diet enriched in branched amino acids (BCAAs) allows to normalize plasma BCAA levels. This suggests that it may be possible to treat patients with mutations in BCKDK with BCAA supplementation.</text>
</comment>
<comment type="similarity">
    <text evidence="14">Belongs to the PDK/BCKDK protein kinase family.</text>
</comment>
<comment type="online information" name="Protein Spotlight">
    <link uri="https://www.proteinspotlight.org/back_issues/147"/>
    <text>The silence within - Issue 147 of March 2013</text>
</comment>
<gene>
    <name evidence="12 16" type="primary">BCKDK</name>
</gene>
<reference key="1">
    <citation type="submission" date="1997-09" db="EMBL/GenBank/DDBJ databases">
        <authorList>
            <person name="Chuang J.C."/>
            <person name="Cox R.P."/>
            <person name="Chuang D.T."/>
        </authorList>
    </citation>
    <scope>NUCLEOTIDE SEQUENCE [MRNA] (ISOFORM 1)</scope>
</reference>
<reference key="2">
    <citation type="journal article" date="2004" name="Nat. Genet.">
        <title>Complete sequencing and characterization of 21,243 full-length human cDNAs.</title>
        <authorList>
            <person name="Ota T."/>
            <person name="Suzuki Y."/>
            <person name="Nishikawa T."/>
            <person name="Otsuki T."/>
            <person name="Sugiyama T."/>
            <person name="Irie R."/>
            <person name="Wakamatsu A."/>
            <person name="Hayashi K."/>
            <person name="Sato H."/>
            <person name="Nagai K."/>
            <person name="Kimura K."/>
            <person name="Makita H."/>
            <person name="Sekine M."/>
            <person name="Obayashi M."/>
            <person name="Nishi T."/>
            <person name="Shibahara T."/>
            <person name="Tanaka T."/>
            <person name="Ishii S."/>
            <person name="Yamamoto J."/>
            <person name="Saito K."/>
            <person name="Kawai Y."/>
            <person name="Isono Y."/>
            <person name="Nakamura Y."/>
            <person name="Nagahari K."/>
            <person name="Murakami K."/>
            <person name="Yasuda T."/>
            <person name="Iwayanagi T."/>
            <person name="Wagatsuma M."/>
            <person name="Shiratori A."/>
            <person name="Sudo H."/>
            <person name="Hosoiri T."/>
            <person name="Kaku Y."/>
            <person name="Kodaira H."/>
            <person name="Kondo H."/>
            <person name="Sugawara M."/>
            <person name="Takahashi M."/>
            <person name="Kanda K."/>
            <person name="Yokoi T."/>
            <person name="Furuya T."/>
            <person name="Kikkawa E."/>
            <person name="Omura Y."/>
            <person name="Abe K."/>
            <person name="Kamihara K."/>
            <person name="Katsuta N."/>
            <person name="Sato K."/>
            <person name="Tanikawa M."/>
            <person name="Yamazaki M."/>
            <person name="Ninomiya K."/>
            <person name="Ishibashi T."/>
            <person name="Yamashita H."/>
            <person name="Murakawa K."/>
            <person name="Fujimori K."/>
            <person name="Tanai H."/>
            <person name="Kimata M."/>
            <person name="Watanabe M."/>
            <person name="Hiraoka S."/>
            <person name="Chiba Y."/>
            <person name="Ishida S."/>
            <person name="Ono Y."/>
            <person name="Takiguchi S."/>
            <person name="Watanabe S."/>
            <person name="Yosida M."/>
            <person name="Hotuta T."/>
            <person name="Kusano J."/>
            <person name="Kanehori K."/>
            <person name="Takahashi-Fujii A."/>
            <person name="Hara H."/>
            <person name="Tanase T.-O."/>
            <person name="Nomura Y."/>
            <person name="Togiya S."/>
            <person name="Komai F."/>
            <person name="Hara R."/>
            <person name="Takeuchi K."/>
            <person name="Arita M."/>
            <person name="Imose N."/>
            <person name="Musashino K."/>
            <person name="Yuuki H."/>
            <person name="Oshima A."/>
            <person name="Sasaki N."/>
            <person name="Aotsuka S."/>
            <person name="Yoshikawa Y."/>
            <person name="Matsunawa H."/>
            <person name="Ichihara T."/>
            <person name="Shiohata N."/>
            <person name="Sano S."/>
            <person name="Moriya S."/>
            <person name="Momiyama H."/>
            <person name="Satoh N."/>
            <person name="Takami S."/>
            <person name="Terashima Y."/>
            <person name="Suzuki O."/>
            <person name="Nakagawa S."/>
            <person name="Senoh A."/>
            <person name="Mizoguchi H."/>
            <person name="Goto Y."/>
            <person name="Shimizu F."/>
            <person name="Wakebe H."/>
            <person name="Hishigaki H."/>
            <person name="Watanabe T."/>
            <person name="Sugiyama A."/>
            <person name="Takemoto M."/>
            <person name="Kawakami B."/>
            <person name="Yamazaki M."/>
            <person name="Watanabe K."/>
            <person name="Kumagai A."/>
            <person name="Itakura S."/>
            <person name="Fukuzumi Y."/>
            <person name="Fujimori Y."/>
            <person name="Komiyama M."/>
            <person name="Tashiro H."/>
            <person name="Tanigami A."/>
            <person name="Fujiwara T."/>
            <person name="Ono T."/>
            <person name="Yamada K."/>
            <person name="Fujii Y."/>
            <person name="Ozaki K."/>
            <person name="Hirao M."/>
            <person name="Ohmori Y."/>
            <person name="Kawabata A."/>
            <person name="Hikiji T."/>
            <person name="Kobatake N."/>
            <person name="Inagaki H."/>
            <person name="Ikema Y."/>
            <person name="Okamoto S."/>
            <person name="Okitani R."/>
            <person name="Kawakami T."/>
            <person name="Noguchi S."/>
            <person name="Itoh T."/>
            <person name="Shigeta K."/>
            <person name="Senba T."/>
            <person name="Matsumura K."/>
            <person name="Nakajima Y."/>
            <person name="Mizuno T."/>
            <person name="Morinaga M."/>
            <person name="Sasaki M."/>
            <person name="Togashi T."/>
            <person name="Oyama M."/>
            <person name="Hata H."/>
            <person name="Watanabe M."/>
            <person name="Komatsu T."/>
            <person name="Mizushima-Sugano J."/>
            <person name="Satoh T."/>
            <person name="Shirai Y."/>
            <person name="Takahashi Y."/>
            <person name="Nakagawa K."/>
            <person name="Okumura K."/>
            <person name="Nagase T."/>
            <person name="Nomura N."/>
            <person name="Kikuchi H."/>
            <person name="Masuho Y."/>
            <person name="Yamashita R."/>
            <person name="Nakai K."/>
            <person name="Yada T."/>
            <person name="Nakamura Y."/>
            <person name="Ohara O."/>
            <person name="Isogai T."/>
            <person name="Sugano S."/>
        </authorList>
    </citation>
    <scope>NUCLEOTIDE SEQUENCE [LARGE SCALE MRNA] (ISOFORM 3)</scope>
</reference>
<reference key="3">
    <citation type="submission" date="2004-06" db="EMBL/GenBank/DDBJ databases">
        <title>Cloning of human full open reading frames in Gateway(TM) system entry vector (pDONR201).</title>
        <authorList>
            <person name="Ebert L."/>
            <person name="Schick M."/>
            <person name="Neubert P."/>
            <person name="Schatten R."/>
            <person name="Henze S."/>
            <person name="Korn B."/>
        </authorList>
    </citation>
    <scope>NUCLEOTIDE SEQUENCE [LARGE SCALE MRNA] (ISOFORM 1)</scope>
</reference>
<reference key="4">
    <citation type="journal article" date="2004" name="Nature">
        <title>The sequence and analysis of duplication-rich human chromosome 16.</title>
        <authorList>
            <person name="Martin J."/>
            <person name="Han C."/>
            <person name="Gordon L.A."/>
            <person name="Terry A."/>
            <person name="Prabhakar S."/>
            <person name="She X."/>
            <person name="Xie G."/>
            <person name="Hellsten U."/>
            <person name="Chan Y.M."/>
            <person name="Altherr M."/>
            <person name="Couronne O."/>
            <person name="Aerts A."/>
            <person name="Bajorek E."/>
            <person name="Black S."/>
            <person name="Blumer H."/>
            <person name="Branscomb E."/>
            <person name="Brown N.C."/>
            <person name="Bruno W.J."/>
            <person name="Buckingham J.M."/>
            <person name="Callen D.F."/>
            <person name="Campbell C.S."/>
            <person name="Campbell M.L."/>
            <person name="Campbell E.W."/>
            <person name="Caoile C."/>
            <person name="Challacombe J.F."/>
            <person name="Chasteen L.A."/>
            <person name="Chertkov O."/>
            <person name="Chi H.C."/>
            <person name="Christensen M."/>
            <person name="Clark L.M."/>
            <person name="Cohn J.D."/>
            <person name="Denys M."/>
            <person name="Detter J.C."/>
            <person name="Dickson M."/>
            <person name="Dimitrijevic-Bussod M."/>
            <person name="Escobar J."/>
            <person name="Fawcett J.J."/>
            <person name="Flowers D."/>
            <person name="Fotopulos D."/>
            <person name="Glavina T."/>
            <person name="Gomez M."/>
            <person name="Gonzales E."/>
            <person name="Goodstein D."/>
            <person name="Goodwin L.A."/>
            <person name="Grady D.L."/>
            <person name="Grigoriev I."/>
            <person name="Groza M."/>
            <person name="Hammon N."/>
            <person name="Hawkins T."/>
            <person name="Haydu L."/>
            <person name="Hildebrand C.E."/>
            <person name="Huang W."/>
            <person name="Israni S."/>
            <person name="Jett J."/>
            <person name="Jewett P.B."/>
            <person name="Kadner K."/>
            <person name="Kimball H."/>
            <person name="Kobayashi A."/>
            <person name="Krawczyk M.-C."/>
            <person name="Leyba T."/>
            <person name="Longmire J.L."/>
            <person name="Lopez F."/>
            <person name="Lou Y."/>
            <person name="Lowry S."/>
            <person name="Ludeman T."/>
            <person name="Manohar C.F."/>
            <person name="Mark G.A."/>
            <person name="McMurray K.L."/>
            <person name="Meincke L.J."/>
            <person name="Morgan J."/>
            <person name="Moyzis R.K."/>
            <person name="Mundt M.O."/>
            <person name="Munk A.C."/>
            <person name="Nandkeshwar R.D."/>
            <person name="Pitluck S."/>
            <person name="Pollard M."/>
            <person name="Predki P."/>
            <person name="Parson-Quintana B."/>
            <person name="Ramirez L."/>
            <person name="Rash S."/>
            <person name="Retterer J."/>
            <person name="Ricke D.O."/>
            <person name="Robinson D.L."/>
            <person name="Rodriguez A."/>
            <person name="Salamov A."/>
            <person name="Saunders E.H."/>
            <person name="Scott D."/>
            <person name="Shough T."/>
            <person name="Stallings R.L."/>
            <person name="Stalvey M."/>
            <person name="Sutherland R.D."/>
            <person name="Tapia R."/>
            <person name="Tesmer J.G."/>
            <person name="Thayer N."/>
            <person name="Thompson L.S."/>
            <person name="Tice H."/>
            <person name="Torney D.C."/>
            <person name="Tran-Gyamfi M."/>
            <person name="Tsai M."/>
            <person name="Ulanovsky L.E."/>
            <person name="Ustaszewska A."/>
            <person name="Vo N."/>
            <person name="White P.S."/>
            <person name="Williams A.L."/>
            <person name="Wills P.L."/>
            <person name="Wu J.-R."/>
            <person name="Wu K."/>
            <person name="Yang J."/>
            <person name="DeJong P."/>
            <person name="Bruce D."/>
            <person name="Doggett N.A."/>
            <person name="Deaven L."/>
            <person name="Schmutz J."/>
            <person name="Grimwood J."/>
            <person name="Richardson P."/>
            <person name="Rokhsar D.S."/>
            <person name="Eichler E.E."/>
            <person name="Gilna P."/>
            <person name="Lucas S.M."/>
            <person name="Myers R.M."/>
            <person name="Rubin E.M."/>
            <person name="Pennacchio L.A."/>
        </authorList>
    </citation>
    <scope>NUCLEOTIDE SEQUENCE [LARGE SCALE GENOMIC DNA]</scope>
</reference>
<reference key="5">
    <citation type="submission" date="2005-07" db="EMBL/GenBank/DDBJ databases">
        <authorList>
            <person name="Mural R.J."/>
            <person name="Istrail S."/>
            <person name="Sutton G.G."/>
            <person name="Florea L."/>
            <person name="Halpern A.L."/>
            <person name="Mobarry C.M."/>
            <person name="Lippert R."/>
            <person name="Walenz B."/>
            <person name="Shatkay H."/>
            <person name="Dew I."/>
            <person name="Miller J.R."/>
            <person name="Flanigan M.J."/>
            <person name="Edwards N.J."/>
            <person name="Bolanos R."/>
            <person name="Fasulo D."/>
            <person name="Halldorsson B.V."/>
            <person name="Hannenhalli S."/>
            <person name="Turner R."/>
            <person name="Yooseph S."/>
            <person name="Lu F."/>
            <person name="Nusskern D.R."/>
            <person name="Shue B.C."/>
            <person name="Zheng X.H."/>
            <person name="Zhong F."/>
            <person name="Delcher A.L."/>
            <person name="Huson D.H."/>
            <person name="Kravitz S.A."/>
            <person name="Mouchard L."/>
            <person name="Reinert K."/>
            <person name="Remington K.A."/>
            <person name="Clark A.G."/>
            <person name="Waterman M.S."/>
            <person name="Eichler E.E."/>
            <person name="Adams M.D."/>
            <person name="Hunkapiller M.W."/>
            <person name="Myers E.W."/>
            <person name="Venter J.C."/>
        </authorList>
    </citation>
    <scope>NUCLEOTIDE SEQUENCE [LARGE SCALE GENOMIC DNA]</scope>
</reference>
<reference key="6">
    <citation type="journal article" date="2004" name="Genome Res.">
        <title>The status, quality, and expansion of the NIH full-length cDNA project: the Mammalian Gene Collection (MGC).</title>
        <authorList>
            <consortium name="The MGC Project Team"/>
        </authorList>
    </citation>
    <scope>NUCLEOTIDE SEQUENCE [LARGE SCALE MRNA] (ISOFORMS 1 AND 2)</scope>
    <source>
        <tissue>Lung</tissue>
        <tissue>Placenta</tissue>
    </source>
</reference>
<reference key="7">
    <citation type="journal article" date="2006" name="Cell">
        <title>Global, in vivo, and site-specific phosphorylation dynamics in signaling networks.</title>
        <authorList>
            <person name="Olsen J.V."/>
            <person name="Blagoev B."/>
            <person name="Gnad F."/>
            <person name="Macek B."/>
            <person name="Kumar C."/>
            <person name="Mortensen P."/>
            <person name="Mann M."/>
        </authorList>
    </citation>
    <scope>IDENTIFICATION BY MASS SPECTROMETRY [LARGE SCALE ANALYSIS]</scope>
    <source>
        <tissue>Cervix carcinoma</tissue>
    </source>
</reference>
<reference key="8">
    <citation type="journal article" date="2008" name="J. Proteome Res.">
        <title>Combining protein-based IMAC, peptide-based IMAC, and MudPIT for efficient phosphoproteomic analysis.</title>
        <authorList>
            <person name="Cantin G.T."/>
            <person name="Yi W."/>
            <person name="Lu B."/>
            <person name="Park S.K."/>
            <person name="Xu T."/>
            <person name="Lee J.-D."/>
            <person name="Yates J.R. III"/>
        </authorList>
    </citation>
    <scope>IDENTIFICATION BY MASS SPECTROMETRY [LARGE SCALE ANALYSIS]</scope>
    <source>
        <tissue>Cervix carcinoma</tissue>
    </source>
</reference>
<reference key="9">
    <citation type="journal article" date="2008" name="Mol. Cell">
        <title>Kinase-selective enrichment enables quantitative phosphoproteomics of the kinome across the cell cycle.</title>
        <authorList>
            <person name="Daub H."/>
            <person name="Olsen J.V."/>
            <person name="Bairlein M."/>
            <person name="Gnad F."/>
            <person name="Oppermann F.S."/>
            <person name="Korner R."/>
            <person name="Greff Z."/>
            <person name="Keri G."/>
            <person name="Stemmann O."/>
            <person name="Mann M."/>
        </authorList>
    </citation>
    <scope>IDENTIFICATION BY MASS SPECTROMETRY [LARGE SCALE ANALYSIS]</scope>
    <source>
        <tissue>Cervix carcinoma</tissue>
    </source>
</reference>
<reference key="10">
    <citation type="journal article" date="2009" name="Science">
        <title>Lysine acetylation targets protein complexes and co-regulates major cellular functions.</title>
        <authorList>
            <person name="Choudhary C."/>
            <person name="Kumar C."/>
            <person name="Gnad F."/>
            <person name="Nielsen M.L."/>
            <person name="Rehman M."/>
            <person name="Walther T.C."/>
            <person name="Olsen J.V."/>
            <person name="Mann M."/>
        </authorList>
    </citation>
    <scope>ACETYLATION [LARGE SCALE ANALYSIS] AT LYS-192 AND LYS-233</scope>
    <scope>IDENTIFICATION BY MASS SPECTROMETRY [LARGE SCALE ANALYSIS]</scope>
</reference>
<reference key="11">
    <citation type="journal article" date="2010" name="Sci. Signal.">
        <title>Quantitative phosphoproteomics reveals widespread full phosphorylation site occupancy during mitosis.</title>
        <authorList>
            <person name="Olsen J.V."/>
            <person name="Vermeulen M."/>
            <person name="Santamaria A."/>
            <person name="Kumar C."/>
            <person name="Miller M.L."/>
            <person name="Jensen L.J."/>
            <person name="Gnad F."/>
            <person name="Cox J."/>
            <person name="Jensen T.S."/>
            <person name="Nigg E.A."/>
            <person name="Brunak S."/>
            <person name="Mann M."/>
        </authorList>
    </citation>
    <scope>IDENTIFICATION BY MASS SPECTROMETRY [LARGE SCALE ANALYSIS]</scope>
    <source>
        <tissue>Cervix carcinoma</tissue>
    </source>
</reference>
<reference key="12">
    <citation type="journal article" date="2011" name="Sci. Signal.">
        <title>System-wide temporal characterization of the proteome and phosphoproteome of human embryonic stem cell differentiation.</title>
        <authorList>
            <person name="Rigbolt K.T."/>
            <person name="Prokhorova T.A."/>
            <person name="Akimov V."/>
            <person name="Henningsen J."/>
            <person name="Johansen P.T."/>
            <person name="Kratchmarova I."/>
            <person name="Kassem M."/>
            <person name="Mann M."/>
            <person name="Olsen J.V."/>
            <person name="Blagoev B."/>
        </authorList>
    </citation>
    <scope>IDENTIFICATION BY MASS SPECTROMETRY [LARGE SCALE ANALYSIS]</scope>
</reference>
<reference key="13">
    <citation type="journal article" date="2012" name="J. Biol. Chem.">
        <title>Tissue-specific and nutrient regulation of the branched-chain alpha-keto acid dehydrogenase phosphatase, protein phosphatase 2Cm (PP2Cm).</title>
        <authorList>
            <person name="Zhou M."/>
            <person name="Lu G."/>
            <person name="Gao C."/>
            <person name="Wang Y."/>
            <person name="Sun H."/>
        </authorList>
    </citation>
    <scope>SUBUNIT</scope>
</reference>
<reference key="14">
    <citation type="journal article" date="2013" name="J. Proteome Res.">
        <title>Toward a comprehensive characterization of a human cancer cell phosphoproteome.</title>
        <authorList>
            <person name="Zhou H."/>
            <person name="Di Palma S."/>
            <person name="Preisinger C."/>
            <person name="Peng M."/>
            <person name="Polat A.N."/>
            <person name="Heck A.J."/>
            <person name="Mohammed S."/>
        </authorList>
    </citation>
    <scope>IDENTIFICATION BY MASS SPECTROMETRY [LARGE SCALE ANALYSIS]</scope>
    <source>
        <tissue>Cervix carcinoma</tissue>
        <tissue>Erythroleukemia</tissue>
    </source>
</reference>
<reference key="15">
    <citation type="journal article" date="2014" name="J. Proteomics">
        <title>An enzyme assisted RP-RPLC approach for in-depth analysis of human liver phosphoproteome.</title>
        <authorList>
            <person name="Bian Y."/>
            <person name="Song C."/>
            <person name="Cheng K."/>
            <person name="Dong M."/>
            <person name="Wang F."/>
            <person name="Huang J."/>
            <person name="Sun D."/>
            <person name="Wang L."/>
            <person name="Ye M."/>
            <person name="Zou H."/>
        </authorList>
    </citation>
    <scope>IDENTIFICATION BY MASS SPECTROMETRY [LARGE SCALE ANALYSIS]</scope>
    <source>
        <tissue>Liver</tissue>
    </source>
</reference>
<reference key="16">
    <citation type="journal article" date="2015" name="Proteomics">
        <title>N-terminome analysis of the human mitochondrial proteome.</title>
        <authorList>
            <person name="Vaca Jacome A.S."/>
            <person name="Rabilloud T."/>
            <person name="Schaeffer-Reiss C."/>
            <person name="Rompais M."/>
            <person name="Ayoub D."/>
            <person name="Lane L."/>
            <person name="Bairoch A."/>
            <person name="Van Dorsselaer A."/>
            <person name="Carapito C."/>
        </authorList>
    </citation>
    <scope>IDENTIFICATION BY MASS SPECTROMETRY [LARGE SCALE ANALYSIS]</scope>
</reference>
<reference key="17">
    <citation type="journal article" date="2018" name="Cell Metab.">
        <title>The BCKDH Kinase and Phosphatase Integrate BCAA and Lipid Metabolism via Regulation of ATP-Citrate Lyase.</title>
        <authorList>
            <person name="White P.J."/>
            <person name="McGarrah R.W."/>
            <person name="Grimsrud P.A."/>
            <person name="Tso S.C."/>
            <person name="Yang W.H."/>
            <person name="Haldeman J.M."/>
            <person name="Grenier-Larouche T."/>
            <person name="An J."/>
            <person name="Lapworth A.L."/>
            <person name="Astapova I."/>
            <person name="Hannou S.A."/>
            <person name="George T."/>
            <person name="Arlotto M."/>
            <person name="Olson L.B."/>
            <person name="Lai M."/>
            <person name="Zhang G.F."/>
            <person name="Ilkayeva O."/>
            <person name="Herman M.A."/>
            <person name="Wynn R.M."/>
            <person name="Chuang D.T."/>
            <person name="Newgard C.B."/>
        </authorList>
    </citation>
    <scope>FUNCTION</scope>
    <scope>CATALYTIC ACTIVITY</scope>
    <scope>PATHWAY</scope>
</reference>
<reference key="18">
    <citation type="journal article" date="2023" name="Nat. Commun.">
        <title>Small molecule branched-chain ketoacid dehydrogenase kinase (BDK) inhibitors with opposing effects on BDK protein levels.</title>
        <authorList>
            <person name="Roth Flach R.J."/>
            <person name="Bollinger E."/>
            <person name="Reyes A.R."/>
            <person name="Laforest B."/>
            <person name="Kormos B.L."/>
            <person name="Liu S."/>
            <person name="Reese M.R."/>
            <person name="Martinez Alsina L.A."/>
            <person name="Buzon L."/>
            <person name="Zhang Y."/>
            <person name="Bechle B."/>
            <person name="Rosado A."/>
            <person name="Sahasrabudhe P.V."/>
            <person name="Knafels J."/>
            <person name="Bhattacharya S.K."/>
            <person name="Omoto K."/>
            <person name="Stansfield J.C."/>
            <person name="Hurley L.D."/>
            <person name="Song L."/>
            <person name="Luo L."/>
            <person name="Breitkopf S.B."/>
            <person name="Monetti M."/>
            <person name="Cunio T."/>
            <person name="Tierney B."/>
            <person name="Geoly F.J."/>
            <person name="Delmore J."/>
            <person name="Siddall C.P."/>
            <person name="Xue L."/>
            <person name="Yip K.N."/>
            <person name="Kalgutkar A.S."/>
            <person name="Miller R.A."/>
            <person name="Zhang B.B."/>
            <person name="Filipski K.J."/>
        </authorList>
    </citation>
    <scope>X-RAY CRYSTALLOGRAPHY (2.54 ANGSTROMS) OF 31-412 IN COMPLEX WITH ATP; MG(2+) AND K(+)</scope>
    <scope>FUNCTION</scope>
    <scope>CATALYTIC ACTIVITY</scope>
    <scope>ACTIVITY REGULATION</scope>
    <scope>INTERACTION WITH DBT</scope>
</reference>
<reference key="19">
    <citation type="journal article" date="2012" name="Science">
        <title>Mutations in BCKD-kinase lead to a potentially treatable form of autism with epilepsy.</title>
        <authorList>
            <person name="Novarino G."/>
            <person name="El-Fishawy P."/>
            <person name="Kayserili H."/>
            <person name="Meguid N.A."/>
            <person name="Scott E.M."/>
            <person name="Schroth J."/>
            <person name="Silhavy J.L."/>
            <person name="Kara M."/>
            <person name="Khalil R.O."/>
            <person name="Ben-Omran T."/>
            <person name="Ercan-Sencicek A.G."/>
            <person name="Hashish A.F."/>
            <person name="Sanders S.J."/>
            <person name="Gupta A.R."/>
            <person name="Hashem H.S."/>
            <person name="Matern D."/>
            <person name="Gabriel S."/>
            <person name="Sweetman L."/>
            <person name="Rahimi Y."/>
            <person name="Harris R.A."/>
            <person name="State M.W."/>
            <person name="Gleeson J.G."/>
        </authorList>
    </citation>
    <scope>VARIANT BCKDKD PRO-224</scope>
</reference>
<reference key="20">
    <citation type="journal article" date="2014" name="Hum. Mutat.">
        <title>Two novel mutations in the BCKDK (branched-chain keto-acid dehydrogenase kinase) gene are responsible for a neurobehavioral deficit in two pediatric unrelated patients.</title>
        <authorList>
            <person name="Garcia-Cazorla A."/>
            <person name="Oyarzabal A."/>
            <person name="Fort J."/>
            <person name="Robles C."/>
            <person name="Castejon E."/>
            <person name="Ruiz-Sala P."/>
            <person name="Bodoy S."/>
            <person name="Merinero B."/>
            <person name="Lopez-Sala A."/>
            <person name="Dopazo J."/>
            <person name="Nunes V."/>
            <person name="Ugarte M."/>
            <person name="Artuch R."/>
            <person name="Palacin M."/>
            <person name="Rodriguez-Pombo P."/>
            <person name="Alcaide P."/>
            <person name="Navarrete R."/>
            <person name="Sanz P."/>
            <person name="Font-Llitjos M."/>
            <person name="Vilaseca M.A."/>
            <person name="Ormaizabal A."/>
            <person name="Pristoupilova A."/>
            <person name="Agullo S.B."/>
        </authorList>
    </citation>
    <scope>VARIANTS BCKDKD GLY-174 AND PRO-389</scope>
    <scope>CHARACTERIZATION OF VARIANTS BCKDKD GLY-174 AND PRO-389</scope>
    <scope>FUNCTION</scope>
    <scope>CATALYTIC ACTIVITY</scope>
    <scope>SUBCELLULAR LOCATION</scope>
    <scope>AUTOPHOSPHORYLATION</scope>
    <scope>PATHWAY</scope>
</reference>
<dbReference type="EC" id="2.7.11.1" evidence="7 8"/>
<dbReference type="EC" id="2.7.11.4" evidence="7 8 9"/>
<dbReference type="EMBL" id="AF026548">
    <property type="protein sequence ID" value="AAB82714.1"/>
    <property type="molecule type" value="mRNA"/>
</dbReference>
<dbReference type="EMBL" id="AK130145">
    <property type="status" value="NOT_ANNOTATED_CDS"/>
    <property type="molecule type" value="mRNA"/>
</dbReference>
<dbReference type="EMBL" id="CR542093">
    <property type="protein sequence ID" value="CAG46890.1"/>
    <property type="molecule type" value="mRNA"/>
</dbReference>
<dbReference type="EMBL" id="AC135050">
    <property type="status" value="NOT_ANNOTATED_CDS"/>
    <property type="molecule type" value="Genomic_DNA"/>
</dbReference>
<dbReference type="EMBL" id="CH471192">
    <property type="protein sequence ID" value="EAW52160.1"/>
    <property type="molecule type" value="Genomic_DNA"/>
</dbReference>
<dbReference type="EMBL" id="CH471192">
    <property type="protein sequence ID" value="EAW52161.1"/>
    <property type="molecule type" value="Genomic_DNA"/>
</dbReference>
<dbReference type="EMBL" id="CH471192">
    <property type="protein sequence ID" value="EAW52163.1"/>
    <property type="molecule type" value="Genomic_DNA"/>
</dbReference>
<dbReference type="EMBL" id="BC007363">
    <property type="protein sequence ID" value="AAH07363.1"/>
    <property type="molecule type" value="mRNA"/>
</dbReference>
<dbReference type="EMBL" id="BC009872">
    <property type="protein sequence ID" value="AAH09872.1"/>
    <property type="molecule type" value="mRNA"/>
</dbReference>
<dbReference type="CCDS" id="CCDS10705.1">
    <molecule id="O14874-1"/>
</dbReference>
<dbReference type="CCDS" id="CCDS45467.1">
    <molecule id="O14874-3"/>
</dbReference>
<dbReference type="CCDS" id="CCDS61917.1">
    <molecule id="O14874-2"/>
</dbReference>
<dbReference type="RefSeq" id="NP_001116429.1">
    <molecule id="O14874-3"/>
    <property type="nucleotide sequence ID" value="NM_001122957.4"/>
</dbReference>
<dbReference type="RefSeq" id="NP_001258855.1">
    <molecule id="O14874-2"/>
    <property type="nucleotide sequence ID" value="NM_001271926.3"/>
</dbReference>
<dbReference type="RefSeq" id="NP_005872.2">
    <molecule id="O14874-1"/>
    <property type="nucleotide sequence ID" value="NM_005881.4"/>
</dbReference>
<dbReference type="PDB" id="8F5F">
    <property type="method" value="X-ray"/>
    <property type="resolution" value="3.15 A"/>
    <property type="chains" value="A/B=31-412"/>
</dbReference>
<dbReference type="PDB" id="8F5J">
    <property type="method" value="X-ray"/>
    <property type="resolution" value="2.54 A"/>
    <property type="chains" value="A=31-412"/>
</dbReference>
<dbReference type="PDB" id="8F5S">
    <property type="method" value="X-ray"/>
    <property type="resolution" value="2.79 A"/>
    <property type="chains" value="A/B=31-412"/>
</dbReference>
<dbReference type="PDB" id="9DI9">
    <property type="method" value="X-ray"/>
    <property type="resolution" value="2.15 A"/>
    <property type="chains" value="A=31-412"/>
</dbReference>
<dbReference type="PDBsum" id="8F5F"/>
<dbReference type="PDBsum" id="8F5J"/>
<dbReference type="PDBsum" id="8F5S"/>
<dbReference type="PDBsum" id="9DI9"/>
<dbReference type="SMR" id="O14874"/>
<dbReference type="BioGRID" id="115583">
    <property type="interactions" value="189"/>
</dbReference>
<dbReference type="FunCoup" id="O14874">
    <property type="interactions" value="693"/>
</dbReference>
<dbReference type="IntAct" id="O14874">
    <property type="interactions" value="109"/>
</dbReference>
<dbReference type="MINT" id="O14874"/>
<dbReference type="STRING" id="9606.ENSP00000378405"/>
<dbReference type="BindingDB" id="O14874"/>
<dbReference type="ChEMBL" id="CHEMBL4879410"/>
<dbReference type="DrugBank" id="DB02930">
    <property type="generic name" value="Adenosine 5'-[gamma-thio]triphosphate"/>
</dbReference>
<dbReference type="GlyGen" id="O14874">
    <property type="glycosylation" value="1 site, 1 O-linked glycan (1 site)"/>
</dbReference>
<dbReference type="iPTMnet" id="O14874"/>
<dbReference type="PhosphoSitePlus" id="O14874"/>
<dbReference type="SwissPalm" id="O14874"/>
<dbReference type="BioMuta" id="BCKDK"/>
<dbReference type="jPOST" id="O14874"/>
<dbReference type="MassIVE" id="O14874"/>
<dbReference type="PaxDb" id="9606-ENSP00000378405"/>
<dbReference type="PeptideAtlas" id="O14874"/>
<dbReference type="ProteomicsDB" id="2373"/>
<dbReference type="ProteomicsDB" id="48278">
    <molecule id="O14874-1"/>
</dbReference>
<dbReference type="ProteomicsDB" id="76605"/>
<dbReference type="Pumba" id="O14874"/>
<dbReference type="Antibodypedia" id="13936">
    <property type="antibodies" value="354 antibodies from 31 providers"/>
</dbReference>
<dbReference type="DNASU" id="10295"/>
<dbReference type="Ensembl" id="ENST00000219794.11">
    <molecule id="O14874-1"/>
    <property type="protein sequence ID" value="ENSP00000219794.6"/>
    <property type="gene ID" value="ENSG00000103507.14"/>
</dbReference>
<dbReference type="Ensembl" id="ENST00000287507.7">
    <molecule id="O14874-2"/>
    <property type="protein sequence ID" value="ENSP00000287507.3"/>
    <property type="gene ID" value="ENSG00000103507.14"/>
</dbReference>
<dbReference type="Ensembl" id="ENST00000394950.7">
    <molecule id="O14874-3"/>
    <property type="protein sequence ID" value="ENSP00000378404.3"/>
    <property type="gene ID" value="ENSG00000103507.14"/>
</dbReference>
<dbReference type="Ensembl" id="ENST00000394951.5">
    <molecule id="O14874-1"/>
    <property type="protein sequence ID" value="ENSP00000378405.1"/>
    <property type="gene ID" value="ENSG00000103507.14"/>
</dbReference>
<dbReference type="GeneID" id="10295"/>
<dbReference type="KEGG" id="hsa:10295"/>
<dbReference type="MANE-Select" id="ENST00000219794.11">
    <property type="protein sequence ID" value="ENSP00000219794.6"/>
    <property type="RefSeq nucleotide sequence ID" value="NM_005881.4"/>
    <property type="RefSeq protein sequence ID" value="NP_005872.2"/>
</dbReference>
<dbReference type="UCSC" id="uc002eav.6">
    <molecule id="O14874-1"/>
    <property type="organism name" value="human"/>
</dbReference>
<dbReference type="AGR" id="HGNC:16902"/>
<dbReference type="CTD" id="10295"/>
<dbReference type="DisGeNET" id="10295"/>
<dbReference type="GeneCards" id="BCKDK"/>
<dbReference type="HGNC" id="HGNC:16902">
    <property type="gene designation" value="BCKDK"/>
</dbReference>
<dbReference type="HPA" id="ENSG00000103507">
    <property type="expression patterns" value="Low tissue specificity"/>
</dbReference>
<dbReference type="MalaCards" id="BCKDK"/>
<dbReference type="MIM" id="614901">
    <property type="type" value="gene"/>
</dbReference>
<dbReference type="MIM" id="614923">
    <property type="type" value="phenotype"/>
</dbReference>
<dbReference type="neXtProt" id="NX_O14874"/>
<dbReference type="NIAGADS" id="ENSG00000103507"/>
<dbReference type="OpenTargets" id="ENSG00000103507"/>
<dbReference type="Orphanet" id="308410">
    <property type="disease" value="Autism-epilepsy syndrome due to branched chain ketoacid dehydrogenase kinase deficiency"/>
</dbReference>
<dbReference type="PharmGKB" id="PA134899581"/>
<dbReference type="VEuPathDB" id="HostDB:ENSG00000103507"/>
<dbReference type="eggNOG" id="KOG0787">
    <property type="taxonomic scope" value="Eukaryota"/>
</dbReference>
<dbReference type="GeneTree" id="ENSGT01030000234646"/>
<dbReference type="HOGENOM" id="CLU_023861_4_0_1"/>
<dbReference type="InParanoid" id="O14874"/>
<dbReference type="OMA" id="WSYPPSA"/>
<dbReference type="OrthoDB" id="3264224at2759"/>
<dbReference type="PAN-GO" id="O14874">
    <property type="GO annotations" value="4 GO annotations based on evolutionary models"/>
</dbReference>
<dbReference type="PhylomeDB" id="O14874"/>
<dbReference type="TreeFam" id="TF331303"/>
<dbReference type="PathwayCommons" id="O14874"/>
<dbReference type="Reactome" id="R-HSA-70895">
    <property type="pathway name" value="Branched-chain amino acid catabolism"/>
</dbReference>
<dbReference type="Reactome" id="R-HSA-9912481">
    <property type="pathway name" value="Branched-chain ketoacid dehydrogenase kinase deficiency"/>
</dbReference>
<dbReference type="SignaLink" id="O14874"/>
<dbReference type="SIGNOR" id="O14874"/>
<dbReference type="BioGRID-ORCS" id="10295">
    <property type="hits" value="13 hits in 1170 CRISPR screens"/>
</dbReference>
<dbReference type="CD-CODE" id="FB4E32DD">
    <property type="entry name" value="Presynaptic clusters and postsynaptic densities"/>
</dbReference>
<dbReference type="ChiTaRS" id="BCKDK">
    <property type="organism name" value="human"/>
</dbReference>
<dbReference type="GeneWiki" id="BCKDK"/>
<dbReference type="GenomeRNAi" id="10295"/>
<dbReference type="Pharos" id="O14874">
    <property type="development level" value="Tbio"/>
</dbReference>
<dbReference type="PRO" id="PR:O14874"/>
<dbReference type="Proteomes" id="UP000005640">
    <property type="component" value="Chromosome 16"/>
</dbReference>
<dbReference type="RNAct" id="O14874">
    <property type="molecule type" value="protein"/>
</dbReference>
<dbReference type="Bgee" id="ENSG00000103507">
    <property type="expression patterns" value="Expressed in apex of heart and 172 other cell types or tissues"/>
</dbReference>
<dbReference type="ExpressionAtlas" id="O14874">
    <property type="expression patterns" value="baseline and differential"/>
</dbReference>
<dbReference type="GO" id="GO:0005759">
    <property type="term" value="C:mitochondrial matrix"/>
    <property type="evidence" value="ECO:0000304"/>
    <property type="project" value="Reactome"/>
</dbReference>
<dbReference type="GO" id="GO:0005739">
    <property type="term" value="C:mitochondrion"/>
    <property type="evidence" value="ECO:0000314"/>
    <property type="project" value="HPA"/>
</dbReference>
<dbReference type="GO" id="GO:0045252">
    <property type="term" value="C:oxoglutarate dehydrogenase complex"/>
    <property type="evidence" value="ECO:0000250"/>
    <property type="project" value="HGNC-UCL"/>
</dbReference>
<dbReference type="GO" id="GO:0047323">
    <property type="term" value="F:[3-methyl-2-oxobutanoate dehydrogenase (acetyl-transferring)] kinase activity"/>
    <property type="evidence" value="ECO:0007669"/>
    <property type="project" value="UniProtKB-EC"/>
</dbReference>
<dbReference type="GO" id="GO:0005524">
    <property type="term" value="F:ATP binding"/>
    <property type="evidence" value="ECO:0000250"/>
    <property type="project" value="HGNC-UCL"/>
</dbReference>
<dbReference type="GO" id="GO:0016301">
    <property type="term" value="F:kinase activity"/>
    <property type="evidence" value="ECO:0000304"/>
    <property type="project" value="HGNC-UCL"/>
</dbReference>
<dbReference type="GO" id="GO:0106310">
    <property type="term" value="F:protein serine kinase activity"/>
    <property type="evidence" value="ECO:0007669"/>
    <property type="project" value="RHEA"/>
</dbReference>
<dbReference type="GO" id="GO:0004674">
    <property type="term" value="F:protein serine/threonine kinase activity"/>
    <property type="evidence" value="ECO:0000250"/>
    <property type="project" value="HGNC-UCL"/>
</dbReference>
<dbReference type="GO" id="GO:0004722">
    <property type="term" value="F:protein serine/threonine phosphatase activity"/>
    <property type="evidence" value="ECO:0000314"/>
    <property type="project" value="UniProtKB"/>
</dbReference>
<dbReference type="GO" id="GO:0004740">
    <property type="term" value="F:pyruvate dehydrogenase (acetyl-transferring) kinase activity"/>
    <property type="evidence" value="ECO:0000318"/>
    <property type="project" value="GO_Central"/>
</dbReference>
<dbReference type="GO" id="GO:0009063">
    <property type="term" value="P:amino acid catabolic process"/>
    <property type="evidence" value="ECO:0000303"/>
    <property type="project" value="UniProtKB"/>
</dbReference>
<dbReference type="GO" id="GO:0009083">
    <property type="term" value="P:branched-chain amino acid catabolic process"/>
    <property type="evidence" value="ECO:0000250"/>
    <property type="project" value="HGNC-UCL"/>
</dbReference>
<dbReference type="GO" id="GO:0006550">
    <property type="term" value="P:isoleucine catabolic process"/>
    <property type="evidence" value="ECO:0007669"/>
    <property type="project" value="Ensembl"/>
</dbReference>
<dbReference type="GO" id="GO:0006552">
    <property type="term" value="P:L-leucine catabolic process"/>
    <property type="evidence" value="ECO:0007669"/>
    <property type="project" value="Ensembl"/>
</dbReference>
<dbReference type="GO" id="GO:0008610">
    <property type="term" value="P:lipid biosynthetic process"/>
    <property type="evidence" value="ECO:0000315"/>
    <property type="project" value="UniProtKB"/>
</dbReference>
<dbReference type="GO" id="GO:0010510">
    <property type="term" value="P:regulation of acetyl-CoA biosynthetic process from pyruvate"/>
    <property type="evidence" value="ECO:0000318"/>
    <property type="project" value="GO_Central"/>
</dbReference>
<dbReference type="GO" id="GO:0010906">
    <property type="term" value="P:regulation of glucose metabolic process"/>
    <property type="evidence" value="ECO:0000318"/>
    <property type="project" value="GO_Central"/>
</dbReference>
<dbReference type="GO" id="GO:0007283">
    <property type="term" value="P:spermatogenesis"/>
    <property type="evidence" value="ECO:0007669"/>
    <property type="project" value="Ensembl"/>
</dbReference>
<dbReference type="GO" id="GO:0006574">
    <property type="term" value="P:valine catabolic process"/>
    <property type="evidence" value="ECO:0007669"/>
    <property type="project" value="Ensembl"/>
</dbReference>
<dbReference type="CDD" id="cd16929">
    <property type="entry name" value="HATPase_PDK-like"/>
    <property type="match status" value="1"/>
</dbReference>
<dbReference type="FunFam" id="1.20.140.20:FF:000002">
    <property type="entry name" value="[3-methyl-2-oxobutanoate dehydrogenase [lipoamide]] kinase, mitochondrial"/>
    <property type="match status" value="1"/>
</dbReference>
<dbReference type="FunFam" id="3.30.565.10:FF:000051">
    <property type="entry name" value="[3-methyl-2-oxobutanoate dehydrogenase [lipoamide]] kinase, mitochondrial"/>
    <property type="match status" value="1"/>
</dbReference>
<dbReference type="Gene3D" id="1.20.140.20">
    <property type="entry name" value="Alpha-ketoacid/pyruvate dehydrogenase kinase, N-terminal domain"/>
    <property type="match status" value="1"/>
</dbReference>
<dbReference type="Gene3D" id="3.30.565.10">
    <property type="entry name" value="Histidine kinase-like ATPase, C-terminal domain"/>
    <property type="match status" value="1"/>
</dbReference>
<dbReference type="InterPro" id="IPR036784">
    <property type="entry name" value="AK/P_DHK_N_sf"/>
</dbReference>
<dbReference type="InterPro" id="IPR018955">
    <property type="entry name" value="BCDHK/PDK_N"/>
</dbReference>
<dbReference type="InterPro" id="IPR039028">
    <property type="entry name" value="BCKD/PDK"/>
</dbReference>
<dbReference type="InterPro" id="IPR036890">
    <property type="entry name" value="HATPase_C_sf"/>
</dbReference>
<dbReference type="InterPro" id="IPR005467">
    <property type="entry name" value="His_kinase_dom"/>
</dbReference>
<dbReference type="InterPro" id="IPR004358">
    <property type="entry name" value="Sig_transdc_His_kin-like_C"/>
</dbReference>
<dbReference type="PANTHER" id="PTHR11947:SF20">
    <property type="entry name" value="[3-METHYL-2-OXOBUTANOATE DEHYDROGENASE [LIPOAMIDE]] KINASE, MITOCHONDRIAL"/>
    <property type="match status" value="1"/>
</dbReference>
<dbReference type="PANTHER" id="PTHR11947">
    <property type="entry name" value="PYRUVATE DEHYDROGENASE KINASE"/>
    <property type="match status" value="1"/>
</dbReference>
<dbReference type="Pfam" id="PF10436">
    <property type="entry name" value="BCDHK_Adom3"/>
    <property type="match status" value="1"/>
</dbReference>
<dbReference type="Pfam" id="PF02518">
    <property type="entry name" value="HATPase_c"/>
    <property type="match status" value="1"/>
</dbReference>
<dbReference type="PRINTS" id="PR00344">
    <property type="entry name" value="BCTRLSENSOR"/>
</dbReference>
<dbReference type="SMART" id="SM00387">
    <property type="entry name" value="HATPase_c"/>
    <property type="match status" value="1"/>
</dbReference>
<dbReference type="SUPFAM" id="SSF69012">
    <property type="entry name" value="alpha-ketoacid dehydrogenase kinase, N-terminal domain"/>
    <property type="match status" value="1"/>
</dbReference>
<dbReference type="SUPFAM" id="SSF55874">
    <property type="entry name" value="ATPase domain of HSP90 chaperone/DNA topoisomerase II/histidine kinase"/>
    <property type="match status" value="1"/>
</dbReference>
<dbReference type="PROSITE" id="PS50109">
    <property type="entry name" value="HIS_KIN"/>
    <property type="match status" value="1"/>
</dbReference>
<protein>
    <recommendedName>
        <fullName evidence="13">Branched-chain alpha-ketoacid dehydrogenase kinase</fullName>
        <shortName evidence="12">BCKDH kinase</shortName>
        <shortName>BCKDHKIN</shortName>
        <shortName evidence="13">BDK</shortName>
        <ecNumber evidence="7 8">2.7.11.1</ecNumber>
    </recommendedName>
    <alternativeName>
        <fullName evidence="15">[3-methyl-2-oxobutanoate dehydrogenase [lipoamide]] kinase, mitochondrial</fullName>
        <ecNumber evidence="7 8 9">2.7.11.4</ecNumber>
    </alternativeName>
</protein>
<feature type="transit peptide" description="Mitochondrion" evidence="1">
    <location>
        <begin position="1"/>
        <end position="30"/>
    </location>
</feature>
<feature type="chain" id="PRO_0000023452" description="Branched-chain alpha-ketoacid dehydrogenase kinase">
    <location>
        <begin position="31"/>
        <end position="412"/>
    </location>
</feature>
<feature type="domain" description="Histidine kinase" evidence="4">
    <location>
        <begin position="159"/>
        <end position="404"/>
    </location>
</feature>
<feature type="binding site" evidence="9 17">
    <location>
        <position position="279"/>
    </location>
    <ligand>
        <name>ATP</name>
        <dbReference type="ChEBI" id="CHEBI:30616"/>
    </ligand>
</feature>
<feature type="binding site" evidence="9 17 18">
    <location>
        <position position="279"/>
    </location>
    <ligand>
        <name>Mg(2+)</name>
        <dbReference type="ChEBI" id="CHEBI:18420"/>
        <note>structural</note>
    </ligand>
</feature>
<feature type="binding site" evidence="9 17">
    <location>
        <position position="315"/>
    </location>
    <ligand>
        <name>ATP</name>
        <dbReference type="ChEBI" id="CHEBI:30616"/>
    </ligand>
</feature>
<feature type="binding site" evidence="9 17 18">
    <location>
        <position position="328"/>
    </location>
    <ligand>
        <name>K(+)</name>
        <dbReference type="ChEBI" id="CHEBI:29103"/>
        <note>structural</note>
    </ligand>
</feature>
<feature type="binding site" evidence="9 17 18">
    <location>
        <position position="330"/>
    </location>
    <ligand>
        <name>K(+)</name>
        <dbReference type="ChEBI" id="CHEBI:29103"/>
        <note>structural</note>
    </ligand>
</feature>
<feature type="binding site" evidence="9 17 18">
    <location>
        <position position="333"/>
    </location>
    <ligand>
        <name>K(+)</name>
        <dbReference type="ChEBI" id="CHEBI:29103"/>
        <note>structural</note>
    </ligand>
</feature>
<feature type="binding site" evidence="9 17">
    <location>
        <position position="334"/>
    </location>
    <ligand>
        <name>ATP</name>
        <dbReference type="ChEBI" id="CHEBI:30616"/>
    </ligand>
</feature>
<feature type="binding site" evidence="9 17">
    <location>
        <position position="335"/>
    </location>
    <ligand>
        <name>ATP</name>
        <dbReference type="ChEBI" id="CHEBI:30616"/>
    </ligand>
</feature>
<feature type="binding site" evidence="9 17">
    <location>
        <position position="364"/>
    </location>
    <ligand>
        <name>ATP</name>
        <dbReference type="ChEBI" id="CHEBI:30616"/>
    </ligand>
</feature>
<feature type="binding site" evidence="9 17">
    <location>
        <position position="367"/>
    </location>
    <ligand>
        <name>ATP</name>
        <dbReference type="ChEBI" id="CHEBI:30616"/>
    </ligand>
</feature>
<feature type="binding site" evidence="9 17 18">
    <location>
        <position position="367"/>
    </location>
    <ligand>
        <name>K(+)</name>
        <dbReference type="ChEBI" id="CHEBI:29103"/>
        <note>structural</note>
    </ligand>
</feature>
<feature type="binding site" evidence="9 17">
    <location>
        <position position="370"/>
    </location>
    <ligand>
        <name>ATP</name>
        <dbReference type="ChEBI" id="CHEBI:30616"/>
    </ligand>
</feature>
<feature type="modified residue" description="Phosphoserine" evidence="3">
    <location>
        <position position="31"/>
    </location>
</feature>
<feature type="modified residue" description="Phosphoserine; by autocatalysis" evidence="1">
    <location>
        <position position="52"/>
    </location>
</feature>
<feature type="modified residue" description="N6-acetyllysine" evidence="19">
    <location>
        <position position="192"/>
    </location>
</feature>
<feature type="modified residue" description="N6-acetyllysine" evidence="19">
    <location>
        <position position="233"/>
    </location>
</feature>
<feature type="modified residue" description="Phosphoserine" evidence="2">
    <location>
        <position position="356"/>
    </location>
</feature>
<feature type="modified residue" description="Phosphoserine" evidence="3">
    <location>
        <position position="360"/>
    </location>
</feature>
<feature type="splice variant" id="VSP_054604" description="In isoform 2." evidence="11">
    <location>
        <begin position="282"/>
        <end position="311"/>
    </location>
</feature>
<feature type="splice variant" id="VSP_054605" description="In isoform 2 and isoform 3." evidence="10 11">
    <location>
        <begin position="366"/>
        <end position="412"/>
    </location>
</feature>
<feature type="sequence variant" id="VAR_072184" description="In BCKDKD; partial loss of kinase activity." evidence="7">
    <original>R</original>
    <variation>G</variation>
    <location>
        <position position="174"/>
    </location>
</feature>
<feature type="sequence variant" id="VAR_069037" description="In BCKDKD; dbSNP:rs147210405." evidence="6">
    <original>R</original>
    <variation>P</variation>
    <location>
        <position position="224"/>
    </location>
</feature>
<feature type="sequence variant" id="VAR_072185" description="In BCKDKD; complete loss of kinase activity." evidence="7">
    <original>L</original>
    <variation>P</variation>
    <location>
        <position position="389"/>
    </location>
</feature>
<feature type="sequence conflict" description="In Ref. 2; AK130145." evidence="14" ref="2">
    <original>L</original>
    <variation>P</variation>
    <location>
        <position position="3"/>
    </location>
</feature>
<feature type="sequence conflict" description="In Ref. 2; AK130145." evidence="14" ref="2">
    <original>F</original>
    <variation>S</variation>
    <location>
        <position position="114"/>
    </location>
</feature>
<feature type="sequence conflict" description="In Ref. 1; AAB82714." evidence="14" ref="1">
    <original>V</original>
    <variation>F</variation>
    <location>
        <position position="218"/>
    </location>
</feature>
<feature type="sequence conflict" description="In Ref. 2; AK130145." evidence="14" ref="2">
    <original>P</original>
    <variation>S</variation>
    <location>
        <position position="227"/>
    </location>
</feature>
<feature type="helix" evidence="21">
    <location>
        <begin position="57"/>
        <end position="62"/>
    </location>
</feature>
<feature type="helix" evidence="21">
    <location>
        <begin position="72"/>
        <end position="75"/>
    </location>
</feature>
<feature type="turn" evidence="20">
    <location>
        <begin position="81"/>
        <end position="83"/>
    </location>
</feature>
<feature type="helix" evidence="21">
    <location>
        <begin position="85"/>
        <end position="110"/>
    </location>
</feature>
<feature type="helix" evidence="21">
    <location>
        <begin position="114"/>
        <end position="117"/>
    </location>
</feature>
<feature type="helix" evidence="21">
    <location>
        <begin position="120"/>
        <end position="138"/>
    </location>
</feature>
<feature type="helix" evidence="21">
    <location>
        <begin position="145"/>
        <end position="161"/>
    </location>
</feature>
<feature type="turn" evidence="21">
    <location>
        <begin position="162"/>
        <end position="164"/>
    </location>
</feature>
<feature type="helix" evidence="21">
    <location>
        <begin position="165"/>
        <end position="176"/>
    </location>
</feature>
<feature type="helix" evidence="21">
    <location>
        <begin position="177"/>
        <end position="179"/>
    </location>
</feature>
<feature type="helix" evidence="21">
    <location>
        <begin position="183"/>
        <end position="209"/>
    </location>
</feature>
<feature type="strand" evidence="21">
    <location>
        <begin position="221"/>
        <end position="225"/>
    </location>
</feature>
<feature type="helix" evidence="21">
    <location>
        <begin position="227"/>
        <end position="246"/>
    </location>
</feature>
<feature type="strand" evidence="21">
    <location>
        <begin position="252"/>
        <end position="257"/>
    </location>
</feature>
<feature type="strand" evidence="21">
    <location>
        <begin position="262"/>
        <end position="264"/>
    </location>
</feature>
<feature type="helix" evidence="21">
    <location>
        <begin position="266"/>
        <end position="286"/>
    </location>
</feature>
<feature type="turn" evidence="21">
    <location>
        <begin position="287"/>
        <end position="290"/>
    </location>
</feature>
<feature type="strand" evidence="22">
    <location>
        <begin position="291"/>
        <end position="294"/>
    </location>
</feature>
<feature type="strand" evidence="21">
    <location>
        <begin position="298"/>
        <end position="304"/>
    </location>
</feature>
<feature type="strand" evidence="21">
    <location>
        <begin position="306"/>
        <end position="315"/>
    </location>
</feature>
<feature type="turn" evidence="21">
    <location>
        <begin position="322"/>
        <end position="329"/>
    </location>
</feature>
<feature type="strand" evidence="22">
    <location>
        <begin position="364"/>
        <end position="367"/>
    </location>
</feature>
<feature type="helix" evidence="21">
    <location>
        <begin position="369"/>
        <end position="379"/>
    </location>
</feature>
<feature type="strand" evidence="21">
    <location>
        <begin position="383"/>
        <end position="389"/>
    </location>
</feature>
<feature type="turn" evidence="21">
    <location>
        <begin position="390"/>
        <end position="392"/>
    </location>
</feature>
<feature type="strand" evidence="21">
    <location>
        <begin position="393"/>
        <end position="401"/>
    </location>
</feature>
<organism>
    <name type="scientific">Homo sapiens</name>
    <name type="common">Human</name>
    <dbReference type="NCBI Taxonomy" id="9606"/>
    <lineage>
        <taxon>Eukaryota</taxon>
        <taxon>Metazoa</taxon>
        <taxon>Chordata</taxon>
        <taxon>Craniata</taxon>
        <taxon>Vertebrata</taxon>
        <taxon>Euteleostomi</taxon>
        <taxon>Mammalia</taxon>
        <taxon>Eutheria</taxon>
        <taxon>Euarchontoglires</taxon>
        <taxon>Primates</taxon>
        <taxon>Haplorrhini</taxon>
        <taxon>Catarrhini</taxon>
        <taxon>Hominidae</taxon>
        <taxon>Homo</taxon>
    </lineage>
</organism>